<protein>
    <recommendedName>
        <fullName evidence="1">Inner capsid protein VP2</fullName>
    </recommendedName>
</protein>
<comment type="function">
    <text evidence="1">Inner capsid protein that self-assembles to form an icosahedral capsid with a T=2 symmetry, which consists of 120 copies of VP2, with channels at each of its five-fold vertices. This capsid constitutes the innermost concentric layer of the viral mature particle. It encapsidates the polymerase VP1, the capping enzyme VP3 and the genomic dsRNA, thereby defining the core. The innermost VP2 capsid and the intermediate VP6 capsid remain intact following cell entry to protect the dsRNA from degradation and to prevent unfavorable antiviral responses in the host cell during all the replication cycle of the virus. Nascent transcripts are transcribed within the structural confines of this double-layered particle (DLP) and are extruded through the channels formed by VP2 N-termini. VP2 is required for the replicase activity of VP1 polymerase. Probably recruits a copy of a VP1-VP3 complex, potentially along with a segment of plus-strand RNA, as a decamer of VP2 assembles. May activate the autoinhibited VP1/RNA complex to coordinate packaging and genome replication.</text>
</comment>
<comment type="subunit">
    <text evidence="1">Homodecamer; each decamer is made up of two conformers of VP2, called VP2A and VP2B. Interacts with a VP1-VP3 complex. Interacts with the intermediate capsid protein VP6. Interacts with NSP5. Interacts (via N-terminus) with NSP2.</text>
</comment>
<comment type="subcellular location">
    <subcellularLocation>
        <location evidence="1">Virion</location>
    </subcellularLocation>
    <text evidence="1">Inner capsid protein. Also found in spherical cytoplasmic structures, called virus factories, that appear early after infection and are the site of viral replication and packaging.</text>
</comment>
<comment type="domain">
    <text evidence="1">The N-terminus binds RNA. It is necessary for encapsidation of VP1 and VP3. The N-termini of 10 VP2 molecules form a cylindrical hub underneath each 5-fold axis of the inner capsid.</text>
</comment>
<comment type="PTM">
    <text evidence="1">Sumoylated with SUMO1 and SUMO2. Sumoylation of viral proteins seems to have a positive role on viral replication.</text>
</comment>
<comment type="similarity">
    <text evidence="1">Belongs to the rotavirus VP2 family.</text>
</comment>
<evidence type="ECO:0000255" key="1">
    <source>
        <dbReference type="HAMAP-Rule" id="MF_04127"/>
    </source>
</evidence>
<evidence type="ECO:0000256" key="2">
    <source>
        <dbReference type="SAM" id="MobiDB-lite"/>
    </source>
</evidence>
<accession>A7J399</accession>
<feature type="chain" id="PRO_0000368053" description="Inner capsid protein VP2">
    <location>
        <begin position="1"/>
        <end position="880"/>
    </location>
</feature>
<feature type="region of interest" description="5-fold hub; involved in the encapsidation of VP1 and VP3" evidence="1">
    <location>
        <begin position="1"/>
        <end position="80"/>
    </location>
</feature>
<feature type="region of interest" description="Disordered" evidence="2">
    <location>
        <begin position="1"/>
        <end position="38"/>
    </location>
</feature>
<feature type="region of interest" description="Hydrophobic" evidence="1">
    <location>
        <begin position="394"/>
        <end position="414"/>
    </location>
</feature>
<feature type="region of interest" description="Hydrophobic" evidence="1">
    <location>
        <begin position="422"/>
        <end position="442"/>
    </location>
</feature>
<feature type="compositionally biased region" description="Basic and acidic residues" evidence="2">
    <location>
        <begin position="19"/>
        <end position="30"/>
    </location>
</feature>
<feature type="site" description="Interaction with the intermediate capsid protein VP6" evidence="1">
    <location>
        <position position="220"/>
    </location>
</feature>
<feature type="site" description="Interaction with the intermediate capsid protein VP6" evidence="1">
    <location>
        <position position="224"/>
    </location>
</feature>
<feature type="site" description="Interaction with the intermediate capsid protein VP6" evidence="1">
    <location>
        <position position="228"/>
    </location>
</feature>
<feature type="site" description="Interaction with the intermediate capsid protein VP6" evidence="1">
    <location>
        <position position="839"/>
    </location>
</feature>
<feature type="site" description="Interaction with the intermediate capsid protein VP6" evidence="1">
    <location>
        <position position="841"/>
    </location>
</feature>
<organismHost>
    <name type="scientific">Bos taurus</name>
    <name type="common">Bovine</name>
    <dbReference type="NCBI Taxonomy" id="9913"/>
</organismHost>
<proteinExistence type="inferred from homology"/>
<reference key="1">
    <citation type="journal article" date="2008" name="J. Virol.">
        <title>Full genome-based classification of rotaviruses reveals a common origin between human Wa-Like and porcine rotavirus strains and human DS-1-like and bovine rotavirus strains.</title>
        <authorList>
            <person name="Matthijnssens J."/>
            <person name="Ciarlet M."/>
            <person name="Heiman E.M."/>
            <person name="Arijs I."/>
            <person name="Delbeke T."/>
            <person name="McDonald S.M."/>
            <person name="Palombo E.A."/>
            <person name="Iturriza-Gomara M."/>
            <person name="Maes P."/>
            <person name="Patton J.T."/>
            <person name="Rahman M."/>
            <person name="Van Ranst M."/>
        </authorList>
    </citation>
    <scope>NUCLEOTIDE SEQUENCE [GENOMIC RNA]</scope>
</reference>
<sequence length="880" mass="102535">MAYRKRGARREANINNNDRMQEKDDEKQDQNNRIQLSDKVLSKKEEVVTDSQEEIKIADEVKKSTKEESKQLLEVLKTKEEHQKEIQYEILQKTIPTFEPKESILKKLEDIKPEQAKKQTKLFRIFEPRQLPIYRANGEKELRNRWYWKLKKDTLPDGDYDVREYFLNLYDQVLTEMPDYLLLKDMAVENKNSRDAGKVVDSETASICDAIFQDEETEGAVRRFIAEMRQRVQADRNVVNYPSILHPIDYAFNEYFLQHQLVEPLNNDIIFNYIPERIRNDVNYILNMDRNLPSTARYIRPNLLQDRLNLHDNFESLWDTITTSNYILARSVVPDLKELVSTEAQIQKMSQDLQLEALTIQSETQFLTGINSQAANDCFKTLIAAMLSQRTMSLDFVTTNYMSLISGMWLLTVVPNDMFIRESLVACQLAIVNTIIYPAFGMQRMHYRNGDPQTPFQIAEQQIQNFQVANWLHFVNNNQFRQVVIDGVLNQVLNDNIRNGHVINQLMEALMQLSRQQFPTMPVDYKRSIQRGILLLSNRLGQLVDLTRLLAYNYETLMACVTMNMQHVQTLTTEKLQLTSVTSLCMLIGNATVIPRPQTLFHYYNVNVNFHSNYNERINDAVAIITAANRLNLYQKKMKAIVEDFLKRLHIFDVARVPDDQMYRLRDRLRLLPVEVRRLDIFNLILMNMDQIERASDKIAQGVIIAYRDMQLERDEMYGYVNIARNLDGFQQINLEELMRTGDYAQITNMLLNNQPVALVGALPFVTDSSVISLIAKLDATVFAQIVKLRKVDTLKPILYKINSDSNDFYLVANYDWVPTSTTKVYKQVPQQFDFRNSMHMLTSNLTFTVYSDLLAFVSADTVEPINAVAFDNMRIMNEL</sequence>
<organism>
    <name type="scientific">Rotavirus A (strain RVA/Cow/United States/NCDV-Lincoln/1969/G6P6[1])</name>
    <name type="common">RV-A</name>
    <name type="synonym">Rotavirus A (strain Nebraska calf diarrhea virus)</name>
    <dbReference type="NCBI Taxonomy" id="36439"/>
    <lineage>
        <taxon>Viruses</taxon>
        <taxon>Riboviria</taxon>
        <taxon>Orthornavirae</taxon>
        <taxon>Duplornaviricota</taxon>
        <taxon>Resentoviricetes</taxon>
        <taxon>Reovirales</taxon>
        <taxon>Sedoreoviridae</taxon>
        <taxon>Rotavirus</taxon>
        <taxon>Rotavirus A</taxon>
    </lineage>
</organism>
<keyword id="KW-0167">Capsid protein</keyword>
<keyword id="KW-1153">Inner capsid protein</keyword>
<keyword id="KW-0677">Repeat</keyword>
<keyword id="KW-0694">RNA-binding</keyword>
<keyword id="KW-1141">T=2 icosahedral capsid protein</keyword>
<keyword id="KW-0832">Ubl conjugation</keyword>
<keyword id="KW-0946">Virion</keyword>
<name>VP2_ROTBN</name>
<dbReference type="EMBL" id="DQ870494">
    <property type="protein sequence ID" value="ABI60861.1"/>
    <property type="molecule type" value="Genomic_RNA"/>
</dbReference>
<dbReference type="SMR" id="A7J399"/>
<dbReference type="GO" id="GO:0039616">
    <property type="term" value="C:T=2 icosahedral viral capsid"/>
    <property type="evidence" value="ECO:0007669"/>
    <property type="project" value="UniProtKB-UniRule"/>
</dbReference>
<dbReference type="GO" id="GO:0039625">
    <property type="term" value="C:viral inner capsid"/>
    <property type="evidence" value="ECO:0007669"/>
    <property type="project" value="UniProtKB-UniRule"/>
</dbReference>
<dbReference type="GO" id="GO:0019013">
    <property type="term" value="C:viral nucleocapsid"/>
    <property type="evidence" value="ECO:0007669"/>
    <property type="project" value="UniProtKB-UniRule"/>
</dbReference>
<dbReference type="GO" id="GO:0003723">
    <property type="term" value="F:RNA binding"/>
    <property type="evidence" value="ECO:0007669"/>
    <property type="project" value="UniProtKB-UniRule"/>
</dbReference>
<dbReference type="HAMAP" id="MF_04123">
    <property type="entry name" value="Rota_VP2"/>
    <property type="match status" value="1"/>
</dbReference>
<dbReference type="HAMAP" id="MF_04127">
    <property type="entry name" value="Rota_VP2_A"/>
    <property type="match status" value="1"/>
</dbReference>
<dbReference type="InterPro" id="IPR007779">
    <property type="entry name" value="Rotavirus_VP2"/>
</dbReference>
<dbReference type="Pfam" id="PF05087">
    <property type="entry name" value="Rota_VP2"/>
    <property type="match status" value="1"/>
</dbReference>